<sequence>LKEEAFILGMDVSFMDEIEQHGGSYRDENGQQEDLLTLLKMGDANAIRLRIWNDPVGGFCNLERTVAVAKRVKEHGLHFLLDFHYSDRWADPANQWKPKAWEKLSYEELQRAVCNYTADVLRTLKEHDALPDMVQVGNEITPGMLWDEGRVSGEEHDTDEQWERFAGLVKYGIAAVKSVDSEIKIMIHIDRGGDNAESRKFYDRFEALGVEFDIIGLSYYPWWHGTLDALRDNLHDLAERYGKPINVVETAYPWTLEQPDGHEWILNQEELLLPGYPASVEGQTRYLKDLLQIVREVPGGLGAGFYYWEPAWIPSKEEWSVGHPNNWGNLTMFDFKGQKLQSFSALKAGLENETEWDEQPNAALIK</sequence>
<proteinExistence type="inferred from homology"/>
<dbReference type="EMBL" id="L03425">
    <property type="protein sequence ID" value="AAA22259.1"/>
    <property type="molecule type" value="Genomic_DNA"/>
</dbReference>
<dbReference type="SMR" id="P48843"/>
<dbReference type="CAZy" id="GH53">
    <property type="family name" value="Glycoside Hydrolase Family 53"/>
</dbReference>
<dbReference type="GO" id="GO:0015926">
    <property type="term" value="F:glucosidase activity"/>
    <property type="evidence" value="ECO:0007669"/>
    <property type="project" value="InterPro"/>
</dbReference>
<dbReference type="GO" id="GO:0045490">
    <property type="term" value="P:pectin catabolic process"/>
    <property type="evidence" value="ECO:0007669"/>
    <property type="project" value="TreeGrafter"/>
</dbReference>
<dbReference type="Gene3D" id="3.20.20.80">
    <property type="entry name" value="Glycosidases"/>
    <property type="match status" value="1"/>
</dbReference>
<dbReference type="InterPro" id="IPR011683">
    <property type="entry name" value="Glyco_hydro_53"/>
</dbReference>
<dbReference type="InterPro" id="IPR017853">
    <property type="entry name" value="Glycoside_hydrolase_SF"/>
</dbReference>
<dbReference type="PANTHER" id="PTHR34983">
    <property type="entry name" value="ARABINOGALACTAN ENDO-BETA-1,4-GALACTANASE A"/>
    <property type="match status" value="1"/>
</dbReference>
<dbReference type="PANTHER" id="PTHR34983:SF2">
    <property type="entry name" value="ENDO-BETA-1,4-GALACTANASE"/>
    <property type="match status" value="1"/>
</dbReference>
<dbReference type="Pfam" id="PF07745">
    <property type="entry name" value="Glyco_hydro_53"/>
    <property type="match status" value="1"/>
</dbReference>
<dbReference type="SUPFAM" id="SSF51445">
    <property type="entry name" value="(Trans)glycosidases"/>
    <property type="match status" value="1"/>
</dbReference>
<organism>
    <name type="scientific">Niallia circulans</name>
    <name type="common">Bacillus circulans</name>
    <dbReference type="NCBI Taxonomy" id="1397"/>
    <lineage>
        <taxon>Bacteria</taxon>
        <taxon>Bacillati</taxon>
        <taxon>Bacillota</taxon>
        <taxon>Bacilli</taxon>
        <taxon>Bacillales</taxon>
        <taxon>Bacillaceae</taxon>
        <taxon>Niallia</taxon>
    </lineage>
</organism>
<reference key="1">
    <citation type="submission" date="1992-10" db="EMBL/GenBank/DDBJ databases">
        <authorList>
            <person name="Nelms J."/>
            <person name="Fotheringham I.G."/>
        </authorList>
    </citation>
    <scope>NUCLEOTIDE SEQUENCE [GENOMIC DNA]</scope>
</reference>
<feature type="chain" id="PRO_0000057707" description="Uncharacterized protein in bgaB 5'region">
    <location>
        <begin position="1" status="less than"/>
        <end position="366"/>
    </location>
</feature>
<feature type="active site" description="Proton donor" evidence="1">
    <location>
        <position position="139"/>
    </location>
</feature>
<feature type="active site" description="Nucleophile" evidence="1">
    <location>
        <position position="249"/>
    </location>
</feature>
<feature type="non-terminal residue">
    <location>
        <position position="1"/>
    </location>
</feature>
<evidence type="ECO:0000250" key="1"/>
<evidence type="ECO:0000305" key="2"/>
<name>YBAB_NIACI</name>
<accession>P48843</accession>
<keyword id="KW-0326">Glycosidase</keyword>
<keyword id="KW-0378">Hydrolase</keyword>
<comment type="similarity">
    <text evidence="2">Belongs to the glycosyl hydrolase 53 family.</text>
</comment>
<protein>
    <recommendedName>
        <fullName>Uncharacterized protein in bgaB 5'region</fullName>
    </recommendedName>
    <alternativeName>
        <fullName>ORF1</fullName>
    </alternativeName>
</protein>